<evidence type="ECO:0000305" key="1"/>
<name>PP357_ARATH</name>
<dbReference type="EMBL" id="AL078620">
    <property type="protein sequence ID" value="CAB44688.1"/>
    <property type="molecule type" value="Genomic_DNA"/>
</dbReference>
<dbReference type="EMBL" id="AL161595">
    <property type="protein sequence ID" value="CAB80616.1"/>
    <property type="molecule type" value="Genomic_DNA"/>
</dbReference>
<dbReference type="EMBL" id="CP002687">
    <property type="protein sequence ID" value="AEE87082.1"/>
    <property type="molecule type" value="Genomic_DNA"/>
</dbReference>
<dbReference type="PIR" id="T09369">
    <property type="entry name" value="T09369"/>
</dbReference>
<dbReference type="RefSeq" id="NP_195663.1">
    <property type="nucleotide sequence ID" value="NM_120113.2"/>
</dbReference>
<dbReference type="SMR" id="Q9SVA5"/>
<dbReference type="FunCoup" id="Q9SVA5">
    <property type="interactions" value="351"/>
</dbReference>
<dbReference type="STRING" id="3702.Q9SVA5"/>
<dbReference type="iPTMnet" id="Q9SVA5"/>
<dbReference type="PaxDb" id="3702-AT4G39530.1"/>
<dbReference type="ProteomicsDB" id="248999"/>
<dbReference type="EnsemblPlants" id="AT4G39530.1">
    <property type="protein sequence ID" value="AT4G39530.1"/>
    <property type="gene ID" value="AT4G39530"/>
</dbReference>
<dbReference type="GeneID" id="830107"/>
<dbReference type="Gramene" id="AT4G39530.1">
    <property type="protein sequence ID" value="AT4G39530.1"/>
    <property type="gene ID" value="AT4G39530"/>
</dbReference>
<dbReference type="KEGG" id="ath:AT4G39530"/>
<dbReference type="Araport" id="AT4G39530"/>
<dbReference type="TAIR" id="AT4G39530"/>
<dbReference type="eggNOG" id="KOG4197">
    <property type="taxonomic scope" value="Eukaryota"/>
</dbReference>
<dbReference type="HOGENOM" id="CLU_002706_15_6_1"/>
<dbReference type="InParanoid" id="Q9SVA5"/>
<dbReference type="OMA" id="IWNSMIF"/>
<dbReference type="PhylomeDB" id="Q9SVA5"/>
<dbReference type="PRO" id="PR:Q9SVA5"/>
<dbReference type="Proteomes" id="UP000006548">
    <property type="component" value="Chromosome 4"/>
</dbReference>
<dbReference type="ExpressionAtlas" id="Q9SVA5">
    <property type="expression patterns" value="baseline and differential"/>
</dbReference>
<dbReference type="GO" id="GO:0003723">
    <property type="term" value="F:RNA binding"/>
    <property type="evidence" value="ECO:0007669"/>
    <property type="project" value="InterPro"/>
</dbReference>
<dbReference type="GO" id="GO:0009451">
    <property type="term" value="P:RNA modification"/>
    <property type="evidence" value="ECO:0007669"/>
    <property type="project" value="InterPro"/>
</dbReference>
<dbReference type="FunFam" id="1.25.40.10:FF:000353">
    <property type="entry name" value="Pentatricopeptide repeat-containing protein At4g39530"/>
    <property type="match status" value="1"/>
</dbReference>
<dbReference type="FunFam" id="1.25.40.10:FF:000957">
    <property type="entry name" value="Pentatricopeptide repeat-containing protein At4g39530"/>
    <property type="match status" value="1"/>
</dbReference>
<dbReference type="FunFam" id="1.25.40.10:FF:000958">
    <property type="entry name" value="Pentatricopeptide repeat-containing protein At4g39530"/>
    <property type="match status" value="1"/>
</dbReference>
<dbReference type="FunFam" id="1.25.40.10:FF:000361">
    <property type="entry name" value="Pentatricopeptide repeat-containing protein chloroplastic"/>
    <property type="match status" value="1"/>
</dbReference>
<dbReference type="FunFam" id="1.25.40.10:FF:000090">
    <property type="entry name" value="Pentatricopeptide repeat-containing protein, chloroplastic"/>
    <property type="match status" value="1"/>
</dbReference>
<dbReference type="Gene3D" id="1.25.40.10">
    <property type="entry name" value="Tetratricopeptide repeat domain"/>
    <property type="match status" value="6"/>
</dbReference>
<dbReference type="InterPro" id="IPR046848">
    <property type="entry name" value="E_motif"/>
</dbReference>
<dbReference type="InterPro" id="IPR046849">
    <property type="entry name" value="Eplus_motif"/>
</dbReference>
<dbReference type="InterPro" id="IPR002885">
    <property type="entry name" value="Pentatricopeptide_rpt"/>
</dbReference>
<dbReference type="InterPro" id="IPR046960">
    <property type="entry name" value="PPR_At4g14850-like_plant"/>
</dbReference>
<dbReference type="InterPro" id="IPR011990">
    <property type="entry name" value="TPR-like_helical_dom_sf"/>
</dbReference>
<dbReference type="NCBIfam" id="TIGR00756">
    <property type="entry name" value="PPR"/>
    <property type="match status" value="4"/>
</dbReference>
<dbReference type="PANTHER" id="PTHR47926">
    <property type="entry name" value="PENTATRICOPEPTIDE REPEAT-CONTAINING PROTEIN"/>
    <property type="match status" value="1"/>
</dbReference>
<dbReference type="PANTHER" id="PTHR47926:SF477">
    <property type="entry name" value="PENTATRICOPEPTIDE REPEAT-CONTAINING PROTEIN"/>
    <property type="match status" value="1"/>
</dbReference>
<dbReference type="Pfam" id="PF20431">
    <property type="entry name" value="E_motif"/>
    <property type="match status" value="1"/>
</dbReference>
<dbReference type="Pfam" id="PF20430">
    <property type="entry name" value="Eplus_motif"/>
    <property type="match status" value="1"/>
</dbReference>
<dbReference type="Pfam" id="PF01535">
    <property type="entry name" value="PPR"/>
    <property type="match status" value="7"/>
</dbReference>
<dbReference type="Pfam" id="PF13041">
    <property type="entry name" value="PPR_2"/>
    <property type="match status" value="2"/>
</dbReference>
<dbReference type="Pfam" id="PF13812">
    <property type="entry name" value="PPR_3"/>
    <property type="match status" value="1"/>
</dbReference>
<dbReference type="SUPFAM" id="SSF48452">
    <property type="entry name" value="TPR-like"/>
    <property type="match status" value="1"/>
</dbReference>
<dbReference type="PROSITE" id="PS51375">
    <property type="entry name" value="PPR"/>
    <property type="match status" value="18"/>
</dbReference>
<comment type="similarity">
    <text evidence="1">Belongs to the PPR family. PCMP-E subfamily.</text>
</comment>
<comment type="online information" name="Pentatricopeptide repeat proteins">
    <link uri="https://ppr.plantenergy.uwa.edu.au"/>
</comment>
<sequence length="834" mass="93794">MRSYRCWRKVQETIRLYSSSSSSASSLLEFVNADFPSTIGIRGRREFARLLQLRASDDLLHYQNVVHGQIIVWGLELDTYLSNILINLYSRAGGMVYARKVFEKMPERNLVSWSTMVSACNHHGIYEESLVVFLEFWRTRKDSPNEYILSSFIQACSGLDGRGRWMVFQLQSFLVKSGFDRDVYVGTLLIDFYLKDGNIDYARLVFDALPEKSTVTWTTMISGCVKMGRSYVSLQLFYQLMEDNVVPDGYILSTVLSACSILPFLEGGKQIHAHILRYGLEMDASLMNVLIDSYVKCGRVIAAHKLFNGMPNKNIISWTTLLSGYKQNALHKEAMELFTSMSKFGLKPDMYACSSILTSCASLHALGFGTQVHAYTIKANLGNDSYVTNSLIDMYAKCDCLTDARKVFDIFAAADVVLFNAMIEGYSRLGTQWELHEALNIFRDMRFRLIRPSLLTFVSLLRASASLTSLGLSKQIHGLMFKYGLNLDIFAGSALIDVYSNCYCLKDSRLVFDEMKVKDLVIWNSMFAGYVQQSENEEALNLFLELQLSRERPDEFTFANMVTAAGNLASVQLGQEFHCQLLKRGLECNPYITNALLDMYAKCGSPEDAHKAFDSAASRDVVCWNSVISSYANHGEGKKALQMLEKMMSEGIEPNYITFVGVLSACSHAGLVEDGLKQFELMLRFGIEPETEHYVCMVSLLGRAGRLNKARELIEKMPTKPAAIVWRSLLSGCAKAGNVELAEHAAEMAILSDPKDSGSFTMLSNIYASKGMWTEAKKVRERMKVEGVVKEPGRSWIGINKEVHIFLSKDKSHCKANQIYEVLDDLLVQIRGVS</sequence>
<protein>
    <recommendedName>
        <fullName>Pentatricopeptide repeat-containing protein At4g39530</fullName>
    </recommendedName>
</protein>
<accession>Q9SVA5</accession>
<organism>
    <name type="scientific">Arabidopsis thaliana</name>
    <name type="common">Mouse-ear cress</name>
    <dbReference type="NCBI Taxonomy" id="3702"/>
    <lineage>
        <taxon>Eukaryota</taxon>
        <taxon>Viridiplantae</taxon>
        <taxon>Streptophyta</taxon>
        <taxon>Embryophyta</taxon>
        <taxon>Tracheophyta</taxon>
        <taxon>Spermatophyta</taxon>
        <taxon>Magnoliopsida</taxon>
        <taxon>eudicotyledons</taxon>
        <taxon>Gunneridae</taxon>
        <taxon>Pentapetalae</taxon>
        <taxon>rosids</taxon>
        <taxon>malvids</taxon>
        <taxon>Brassicales</taxon>
        <taxon>Brassicaceae</taxon>
        <taxon>Camelineae</taxon>
        <taxon>Arabidopsis</taxon>
    </lineage>
</organism>
<gene>
    <name type="primary">PCMP-E52</name>
    <name type="ordered locus">At4g39530</name>
    <name type="ORF">F23K16.160</name>
</gene>
<keyword id="KW-1185">Reference proteome</keyword>
<keyword id="KW-0677">Repeat</keyword>
<reference key="1">
    <citation type="journal article" date="1999" name="Nature">
        <title>Sequence and analysis of chromosome 4 of the plant Arabidopsis thaliana.</title>
        <authorList>
            <person name="Mayer K.F.X."/>
            <person name="Schueller C."/>
            <person name="Wambutt R."/>
            <person name="Murphy G."/>
            <person name="Volckaert G."/>
            <person name="Pohl T."/>
            <person name="Duesterhoeft A."/>
            <person name="Stiekema W."/>
            <person name="Entian K.-D."/>
            <person name="Terryn N."/>
            <person name="Harris B."/>
            <person name="Ansorge W."/>
            <person name="Brandt P."/>
            <person name="Grivell L.A."/>
            <person name="Rieger M."/>
            <person name="Weichselgartner M."/>
            <person name="de Simone V."/>
            <person name="Obermaier B."/>
            <person name="Mache R."/>
            <person name="Mueller M."/>
            <person name="Kreis M."/>
            <person name="Delseny M."/>
            <person name="Puigdomenech P."/>
            <person name="Watson M."/>
            <person name="Schmidtheini T."/>
            <person name="Reichert B."/>
            <person name="Portetelle D."/>
            <person name="Perez-Alonso M."/>
            <person name="Boutry M."/>
            <person name="Bancroft I."/>
            <person name="Vos P."/>
            <person name="Hoheisel J."/>
            <person name="Zimmermann W."/>
            <person name="Wedler H."/>
            <person name="Ridley P."/>
            <person name="Langham S.-A."/>
            <person name="McCullagh B."/>
            <person name="Bilham L."/>
            <person name="Robben J."/>
            <person name="van der Schueren J."/>
            <person name="Grymonprez B."/>
            <person name="Chuang Y.-J."/>
            <person name="Vandenbussche F."/>
            <person name="Braeken M."/>
            <person name="Weltjens I."/>
            <person name="Voet M."/>
            <person name="Bastiaens I."/>
            <person name="Aert R."/>
            <person name="Defoor E."/>
            <person name="Weitzenegger T."/>
            <person name="Bothe G."/>
            <person name="Ramsperger U."/>
            <person name="Hilbert H."/>
            <person name="Braun M."/>
            <person name="Holzer E."/>
            <person name="Brandt A."/>
            <person name="Peters S."/>
            <person name="van Staveren M."/>
            <person name="Dirkse W."/>
            <person name="Mooijman P."/>
            <person name="Klein Lankhorst R."/>
            <person name="Rose M."/>
            <person name="Hauf J."/>
            <person name="Koetter P."/>
            <person name="Berneiser S."/>
            <person name="Hempel S."/>
            <person name="Feldpausch M."/>
            <person name="Lamberth S."/>
            <person name="Van den Daele H."/>
            <person name="De Keyser A."/>
            <person name="Buysshaert C."/>
            <person name="Gielen J."/>
            <person name="Villarroel R."/>
            <person name="De Clercq R."/>
            <person name="van Montagu M."/>
            <person name="Rogers J."/>
            <person name="Cronin A."/>
            <person name="Quail M.A."/>
            <person name="Bray-Allen S."/>
            <person name="Clark L."/>
            <person name="Doggett J."/>
            <person name="Hall S."/>
            <person name="Kay M."/>
            <person name="Lennard N."/>
            <person name="McLay K."/>
            <person name="Mayes R."/>
            <person name="Pettett A."/>
            <person name="Rajandream M.A."/>
            <person name="Lyne M."/>
            <person name="Benes V."/>
            <person name="Rechmann S."/>
            <person name="Borkova D."/>
            <person name="Bloecker H."/>
            <person name="Scharfe M."/>
            <person name="Grimm M."/>
            <person name="Loehnert T.-H."/>
            <person name="Dose S."/>
            <person name="de Haan M."/>
            <person name="Maarse A.C."/>
            <person name="Schaefer M."/>
            <person name="Mueller-Auer S."/>
            <person name="Gabel C."/>
            <person name="Fuchs M."/>
            <person name="Fartmann B."/>
            <person name="Granderath K."/>
            <person name="Dauner D."/>
            <person name="Herzl A."/>
            <person name="Neumann S."/>
            <person name="Argiriou A."/>
            <person name="Vitale D."/>
            <person name="Liguori R."/>
            <person name="Piravandi E."/>
            <person name="Massenet O."/>
            <person name="Quigley F."/>
            <person name="Clabauld G."/>
            <person name="Muendlein A."/>
            <person name="Felber R."/>
            <person name="Schnabl S."/>
            <person name="Hiller R."/>
            <person name="Schmidt W."/>
            <person name="Lecharny A."/>
            <person name="Aubourg S."/>
            <person name="Chefdor F."/>
            <person name="Cooke R."/>
            <person name="Berger C."/>
            <person name="Monfort A."/>
            <person name="Casacuberta E."/>
            <person name="Gibbons T."/>
            <person name="Weber N."/>
            <person name="Vandenbol M."/>
            <person name="Bargues M."/>
            <person name="Terol J."/>
            <person name="Torres A."/>
            <person name="Perez-Perez A."/>
            <person name="Purnelle B."/>
            <person name="Bent E."/>
            <person name="Johnson S."/>
            <person name="Tacon D."/>
            <person name="Jesse T."/>
            <person name="Heijnen L."/>
            <person name="Schwarz S."/>
            <person name="Scholler P."/>
            <person name="Heber S."/>
            <person name="Francs P."/>
            <person name="Bielke C."/>
            <person name="Frishman D."/>
            <person name="Haase D."/>
            <person name="Lemcke K."/>
            <person name="Mewes H.-W."/>
            <person name="Stocker S."/>
            <person name="Zaccaria P."/>
            <person name="Bevan M."/>
            <person name="Wilson R.K."/>
            <person name="de la Bastide M."/>
            <person name="Habermann K."/>
            <person name="Parnell L."/>
            <person name="Dedhia N."/>
            <person name="Gnoj L."/>
            <person name="Schutz K."/>
            <person name="Huang E."/>
            <person name="Spiegel L."/>
            <person name="Sekhon M."/>
            <person name="Murray J."/>
            <person name="Sheet P."/>
            <person name="Cordes M."/>
            <person name="Abu-Threideh J."/>
            <person name="Stoneking T."/>
            <person name="Kalicki J."/>
            <person name="Graves T."/>
            <person name="Harmon G."/>
            <person name="Edwards J."/>
            <person name="Latreille P."/>
            <person name="Courtney L."/>
            <person name="Cloud J."/>
            <person name="Abbott A."/>
            <person name="Scott K."/>
            <person name="Johnson D."/>
            <person name="Minx P."/>
            <person name="Bentley D."/>
            <person name="Fulton B."/>
            <person name="Miller N."/>
            <person name="Greco T."/>
            <person name="Kemp K."/>
            <person name="Kramer J."/>
            <person name="Fulton L."/>
            <person name="Mardis E."/>
            <person name="Dante M."/>
            <person name="Pepin K."/>
            <person name="Hillier L.W."/>
            <person name="Nelson J."/>
            <person name="Spieth J."/>
            <person name="Ryan E."/>
            <person name="Andrews S."/>
            <person name="Geisel C."/>
            <person name="Layman D."/>
            <person name="Du H."/>
            <person name="Ali J."/>
            <person name="Berghoff A."/>
            <person name="Jones K."/>
            <person name="Drone K."/>
            <person name="Cotton M."/>
            <person name="Joshu C."/>
            <person name="Antonoiu B."/>
            <person name="Zidanic M."/>
            <person name="Strong C."/>
            <person name="Sun H."/>
            <person name="Lamar B."/>
            <person name="Yordan C."/>
            <person name="Ma P."/>
            <person name="Zhong J."/>
            <person name="Preston R."/>
            <person name="Vil D."/>
            <person name="Shekher M."/>
            <person name="Matero A."/>
            <person name="Shah R."/>
            <person name="Swaby I.K."/>
            <person name="O'Shaughnessy A."/>
            <person name="Rodriguez M."/>
            <person name="Hoffman J."/>
            <person name="Till S."/>
            <person name="Granat S."/>
            <person name="Shohdy N."/>
            <person name="Hasegawa A."/>
            <person name="Hameed A."/>
            <person name="Lodhi M."/>
            <person name="Johnson A."/>
            <person name="Chen E."/>
            <person name="Marra M.A."/>
            <person name="Martienssen R."/>
            <person name="McCombie W.R."/>
        </authorList>
    </citation>
    <scope>NUCLEOTIDE SEQUENCE [LARGE SCALE GENOMIC DNA]</scope>
    <source>
        <strain>cv. Columbia</strain>
    </source>
</reference>
<reference key="2">
    <citation type="journal article" date="2017" name="Plant J.">
        <title>Araport11: a complete reannotation of the Arabidopsis thaliana reference genome.</title>
        <authorList>
            <person name="Cheng C.Y."/>
            <person name="Krishnakumar V."/>
            <person name="Chan A.P."/>
            <person name="Thibaud-Nissen F."/>
            <person name="Schobel S."/>
            <person name="Town C.D."/>
        </authorList>
    </citation>
    <scope>GENOME REANNOTATION</scope>
    <source>
        <strain>cv. Columbia</strain>
    </source>
</reference>
<reference key="3">
    <citation type="journal article" date="2000" name="Plant Mol. Biol.">
        <title>In Arabidopsis thaliana, 1% of the genome codes for a novel protein family unique to plants.</title>
        <authorList>
            <person name="Aubourg S."/>
            <person name="Boudet N."/>
            <person name="Kreis M."/>
            <person name="Lecharny A."/>
        </authorList>
    </citation>
    <scope>GENE FAMILY</scope>
</reference>
<reference key="4">
    <citation type="journal article" date="2004" name="Plant Cell">
        <title>Genome-wide analysis of Arabidopsis pentatricopeptide repeat proteins reveals their essential role in organelle biogenesis.</title>
        <authorList>
            <person name="Lurin C."/>
            <person name="Andres C."/>
            <person name="Aubourg S."/>
            <person name="Bellaoui M."/>
            <person name="Bitton F."/>
            <person name="Bruyere C."/>
            <person name="Caboche M."/>
            <person name="Debast C."/>
            <person name="Gualberto J."/>
            <person name="Hoffmann B."/>
            <person name="Lecharny A."/>
            <person name="Le Ret M."/>
            <person name="Martin-Magniette M.-L."/>
            <person name="Mireau H."/>
            <person name="Peeters N."/>
            <person name="Renou J.-P."/>
            <person name="Szurek B."/>
            <person name="Taconnat L."/>
            <person name="Small I."/>
        </authorList>
    </citation>
    <scope>GENE FAMILY</scope>
</reference>
<feature type="chain" id="PRO_0000363474" description="Pentatricopeptide repeat-containing protein At4g39530">
    <location>
        <begin position="1"/>
        <end position="834"/>
    </location>
</feature>
<feature type="repeat" description="PPR 1">
    <location>
        <begin position="78"/>
        <end position="112"/>
    </location>
</feature>
<feature type="repeat" description="PPR 2">
    <location>
        <begin position="113"/>
        <end position="144"/>
    </location>
</feature>
<feature type="repeat" description="PPR 3">
    <location>
        <begin position="145"/>
        <end position="181"/>
    </location>
</feature>
<feature type="repeat" description="PPR 4">
    <location>
        <begin position="182"/>
        <end position="212"/>
    </location>
</feature>
<feature type="repeat" description="PPR 5">
    <location>
        <begin position="213"/>
        <end position="247"/>
    </location>
</feature>
<feature type="repeat" description="PPR 6">
    <location>
        <begin position="248"/>
        <end position="282"/>
    </location>
</feature>
<feature type="repeat" description="PPR 7">
    <location>
        <begin position="283"/>
        <end position="313"/>
    </location>
</feature>
<feature type="repeat" description="PPR 8">
    <location>
        <begin position="314"/>
        <end position="348"/>
    </location>
</feature>
<feature type="repeat" description="PPR 9">
    <location>
        <begin position="349"/>
        <end position="383"/>
    </location>
</feature>
<feature type="repeat" description="PPR 10">
    <location>
        <begin position="384"/>
        <end position="414"/>
    </location>
</feature>
<feature type="repeat" description="PPR 11">
    <location>
        <begin position="415"/>
        <end position="452"/>
    </location>
</feature>
<feature type="repeat" description="PPR 12">
    <location>
        <begin position="453"/>
        <end position="487"/>
    </location>
</feature>
<feature type="repeat" description="PPR 13">
    <location>
        <begin position="488"/>
        <end position="518"/>
    </location>
</feature>
<feature type="repeat" description="PPR 14">
    <location>
        <begin position="519"/>
        <end position="553"/>
    </location>
</feature>
<feature type="repeat" description="PPR 15">
    <location>
        <begin position="554"/>
        <end position="588"/>
    </location>
</feature>
<feature type="repeat" description="PPR 16">
    <location>
        <begin position="589"/>
        <end position="619"/>
    </location>
</feature>
<feature type="repeat" description="PPR 17">
    <location>
        <begin position="620"/>
        <end position="654"/>
    </location>
</feature>
<feature type="repeat" description="PPR 18">
    <location>
        <begin position="655"/>
        <end position="689"/>
    </location>
</feature>
<feature type="repeat" description="PPR 19">
    <location>
        <begin position="690"/>
        <end position="720"/>
    </location>
</feature>
<feature type="region of interest" description="Type E motif">
    <location>
        <begin position="725"/>
        <end position="800"/>
    </location>
</feature>
<feature type="region of interest" description="Type E(+) motif">
    <location>
        <begin position="801"/>
        <end position="831"/>
    </location>
</feature>
<proteinExistence type="inferred from homology"/>